<keyword id="KW-0413">Isomerase</keyword>
<keyword id="KW-0663">Pyridoxal phosphate</keyword>
<keyword id="KW-1185">Reference proteome</keyword>
<dbReference type="EC" id="5.1.1.1" evidence="1"/>
<dbReference type="EMBL" id="AM746676">
    <property type="protein sequence ID" value="CAN97420.1"/>
    <property type="molecule type" value="Genomic_DNA"/>
</dbReference>
<dbReference type="SMR" id="A9ESU7"/>
<dbReference type="STRING" id="448385.sce7251"/>
<dbReference type="KEGG" id="scl:sce7251"/>
<dbReference type="eggNOG" id="COG0787">
    <property type="taxonomic scope" value="Bacteria"/>
</dbReference>
<dbReference type="HOGENOM" id="CLU_028393_2_2_7"/>
<dbReference type="OrthoDB" id="9813814at2"/>
<dbReference type="BioCyc" id="SCEL448385:SCE_RS37145-MONOMER"/>
<dbReference type="UniPathway" id="UPA00042">
    <property type="reaction ID" value="UER00497"/>
</dbReference>
<dbReference type="Proteomes" id="UP000002139">
    <property type="component" value="Chromosome"/>
</dbReference>
<dbReference type="GO" id="GO:0005829">
    <property type="term" value="C:cytosol"/>
    <property type="evidence" value="ECO:0007669"/>
    <property type="project" value="TreeGrafter"/>
</dbReference>
<dbReference type="GO" id="GO:0008784">
    <property type="term" value="F:alanine racemase activity"/>
    <property type="evidence" value="ECO:0007669"/>
    <property type="project" value="UniProtKB-UniRule"/>
</dbReference>
<dbReference type="GO" id="GO:0030170">
    <property type="term" value="F:pyridoxal phosphate binding"/>
    <property type="evidence" value="ECO:0007669"/>
    <property type="project" value="UniProtKB-UniRule"/>
</dbReference>
<dbReference type="GO" id="GO:0030632">
    <property type="term" value="P:D-alanine biosynthetic process"/>
    <property type="evidence" value="ECO:0007669"/>
    <property type="project" value="UniProtKB-UniRule"/>
</dbReference>
<dbReference type="CDD" id="cd00430">
    <property type="entry name" value="PLPDE_III_AR"/>
    <property type="match status" value="1"/>
</dbReference>
<dbReference type="FunFam" id="3.20.20.10:FF:000002">
    <property type="entry name" value="Alanine racemase"/>
    <property type="match status" value="1"/>
</dbReference>
<dbReference type="Gene3D" id="3.20.20.10">
    <property type="entry name" value="Alanine racemase"/>
    <property type="match status" value="1"/>
</dbReference>
<dbReference type="Gene3D" id="2.40.37.10">
    <property type="entry name" value="Lyase, Ornithine Decarboxylase, Chain A, domain 1"/>
    <property type="match status" value="1"/>
</dbReference>
<dbReference type="HAMAP" id="MF_01201">
    <property type="entry name" value="Ala_racemase"/>
    <property type="match status" value="1"/>
</dbReference>
<dbReference type="InterPro" id="IPR000821">
    <property type="entry name" value="Ala_racemase"/>
</dbReference>
<dbReference type="InterPro" id="IPR009006">
    <property type="entry name" value="Ala_racemase/Decarboxylase_C"/>
</dbReference>
<dbReference type="InterPro" id="IPR011079">
    <property type="entry name" value="Ala_racemase_C"/>
</dbReference>
<dbReference type="InterPro" id="IPR001608">
    <property type="entry name" value="Ala_racemase_N"/>
</dbReference>
<dbReference type="InterPro" id="IPR020622">
    <property type="entry name" value="Ala_racemase_pyridoxalP-BS"/>
</dbReference>
<dbReference type="InterPro" id="IPR029066">
    <property type="entry name" value="PLP-binding_barrel"/>
</dbReference>
<dbReference type="NCBIfam" id="TIGR00492">
    <property type="entry name" value="alr"/>
    <property type="match status" value="1"/>
</dbReference>
<dbReference type="PANTHER" id="PTHR30511">
    <property type="entry name" value="ALANINE RACEMASE"/>
    <property type="match status" value="1"/>
</dbReference>
<dbReference type="PANTHER" id="PTHR30511:SF0">
    <property type="entry name" value="ALANINE RACEMASE, CATABOLIC-RELATED"/>
    <property type="match status" value="1"/>
</dbReference>
<dbReference type="Pfam" id="PF00842">
    <property type="entry name" value="Ala_racemase_C"/>
    <property type="match status" value="1"/>
</dbReference>
<dbReference type="Pfam" id="PF01168">
    <property type="entry name" value="Ala_racemase_N"/>
    <property type="match status" value="1"/>
</dbReference>
<dbReference type="PRINTS" id="PR00992">
    <property type="entry name" value="ALARACEMASE"/>
</dbReference>
<dbReference type="SMART" id="SM01005">
    <property type="entry name" value="Ala_racemase_C"/>
    <property type="match status" value="1"/>
</dbReference>
<dbReference type="SUPFAM" id="SSF50621">
    <property type="entry name" value="Alanine racemase C-terminal domain-like"/>
    <property type="match status" value="1"/>
</dbReference>
<dbReference type="SUPFAM" id="SSF51419">
    <property type="entry name" value="PLP-binding barrel"/>
    <property type="match status" value="1"/>
</dbReference>
<dbReference type="PROSITE" id="PS00395">
    <property type="entry name" value="ALANINE_RACEMASE"/>
    <property type="match status" value="1"/>
</dbReference>
<comment type="function">
    <text evidence="1">Catalyzes the interconversion of L-alanine and D-alanine. May also act on other amino acids.</text>
</comment>
<comment type="catalytic activity">
    <reaction evidence="1">
        <text>L-alanine = D-alanine</text>
        <dbReference type="Rhea" id="RHEA:20249"/>
        <dbReference type="ChEBI" id="CHEBI:57416"/>
        <dbReference type="ChEBI" id="CHEBI:57972"/>
        <dbReference type="EC" id="5.1.1.1"/>
    </reaction>
</comment>
<comment type="cofactor">
    <cofactor evidence="1">
        <name>pyridoxal 5'-phosphate</name>
        <dbReference type="ChEBI" id="CHEBI:597326"/>
    </cofactor>
</comment>
<comment type="pathway">
    <text evidence="1">Amino-acid biosynthesis; D-alanine biosynthesis; D-alanine from L-alanine: step 1/1.</text>
</comment>
<comment type="similarity">
    <text evidence="1">Belongs to the alanine racemase family.</text>
</comment>
<sequence length="379" mass="40620">MRPTRAEVNLAHLRHNLRVLERGLTGATKPQIWGVLKADAYGHGAPAVARTLERAGIPGLCVALLEEAIELRDAGIRLPILVMGGYYGPRRDGFEEIIARDLVPVVYDAGQIERLASVVRLEQRGRVGVHLKVDTGMGRLGAASSEIEAVLATLAKHPEVKLDGLMTHLACADADDLGVTIEQMRLFGEIEQRAKSFGLTPRVRHASNSAAMLRLPAALLDIVRPGVALFGISPCAGLAPDLKPVIRVRSEIVALRTIAKGDRIGYGHTWQASRESVVATVPMGYADGLSRQLSNRGAALVRGQRAPIAGAVSMDLTMLDVTDVPGARLGDEVVFLGTQDGPLGRGTISAEEIAGLTGTIAWEVLTSISRRVPRFYREP</sequence>
<accession>A9ESU7</accession>
<gene>
    <name type="primary">alr</name>
    <name type="ordered locus">sce7251</name>
</gene>
<feature type="chain" id="PRO_1000138623" description="Alanine racemase">
    <location>
        <begin position="1"/>
        <end position="379"/>
    </location>
</feature>
<feature type="active site" description="Proton acceptor; specific for D-alanine" evidence="1">
    <location>
        <position position="37"/>
    </location>
</feature>
<feature type="active site" description="Proton acceptor; specific for L-alanine" evidence="1">
    <location>
        <position position="266"/>
    </location>
</feature>
<feature type="binding site" evidence="1">
    <location>
        <position position="139"/>
    </location>
    <ligand>
        <name>substrate</name>
    </ligand>
</feature>
<feature type="binding site" evidence="1">
    <location>
        <position position="314"/>
    </location>
    <ligand>
        <name>substrate</name>
    </ligand>
</feature>
<feature type="modified residue" description="N6-(pyridoxal phosphate)lysine" evidence="1">
    <location>
        <position position="37"/>
    </location>
</feature>
<protein>
    <recommendedName>
        <fullName evidence="1">Alanine racemase</fullName>
        <ecNumber evidence="1">5.1.1.1</ecNumber>
    </recommendedName>
</protein>
<proteinExistence type="inferred from homology"/>
<reference key="1">
    <citation type="journal article" date="2007" name="Nat. Biotechnol.">
        <title>Complete genome sequence of the myxobacterium Sorangium cellulosum.</title>
        <authorList>
            <person name="Schneiker S."/>
            <person name="Perlova O."/>
            <person name="Kaiser O."/>
            <person name="Gerth K."/>
            <person name="Alici A."/>
            <person name="Altmeyer M.O."/>
            <person name="Bartels D."/>
            <person name="Bekel T."/>
            <person name="Beyer S."/>
            <person name="Bode E."/>
            <person name="Bode H.B."/>
            <person name="Bolten C.J."/>
            <person name="Choudhuri J.V."/>
            <person name="Doss S."/>
            <person name="Elnakady Y.A."/>
            <person name="Frank B."/>
            <person name="Gaigalat L."/>
            <person name="Goesmann A."/>
            <person name="Groeger C."/>
            <person name="Gross F."/>
            <person name="Jelsbak L."/>
            <person name="Jelsbak L."/>
            <person name="Kalinowski J."/>
            <person name="Kegler C."/>
            <person name="Knauber T."/>
            <person name="Konietzny S."/>
            <person name="Kopp M."/>
            <person name="Krause L."/>
            <person name="Krug D."/>
            <person name="Linke B."/>
            <person name="Mahmud T."/>
            <person name="Martinez-Arias R."/>
            <person name="McHardy A.C."/>
            <person name="Merai M."/>
            <person name="Meyer F."/>
            <person name="Mormann S."/>
            <person name="Munoz-Dorado J."/>
            <person name="Perez J."/>
            <person name="Pradella S."/>
            <person name="Rachid S."/>
            <person name="Raddatz G."/>
            <person name="Rosenau F."/>
            <person name="Rueckert C."/>
            <person name="Sasse F."/>
            <person name="Scharfe M."/>
            <person name="Schuster S.C."/>
            <person name="Suen G."/>
            <person name="Treuner-Lange A."/>
            <person name="Velicer G.J."/>
            <person name="Vorholter F.-J."/>
            <person name="Weissman K.J."/>
            <person name="Welch R.D."/>
            <person name="Wenzel S.C."/>
            <person name="Whitworth D.E."/>
            <person name="Wilhelm S."/>
            <person name="Wittmann C."/>
            <person name="Bloecker H."/>
            <person name="Puehler A."/>
            <person name="Mueller R."/>
        </authorList>
    </citation>
    <scope>NUCLEOTIDE SEQUENCE [LARGE SCALE GENOMIC DNA]</scope>
    <source>
        <strain>So ce56</strain>
    </source>
</reference>
<evidence type="ECO:0000255" key="1">
    <source>
        <dbReference type="HAMAP-Rule" id="MF_01201"/>
    </source>
</evidence>
<organism>
    <name type="scientific">Sorangium cellulosum (strain So ce56)</name>
    <name type="common">Polyangium cellulosum (strain So ce56)</name>
    <dbReference type="NCBI Taxonomy" id="448385"/>
    <lineage>
        <taxon>Bacteria</taxon>
        <taxon>Pseudomonadati</taxon>
        <taxon>Myxococcota</taxon>
        <taxon>Polyangia</taxon>
        <taxon>Polyangiales</taxon>
        <taxon>Polyangiaceae</taxon>
        <taxon>Sorangium</taxon>
    </lineage>
</organism>
<name>ALR_SORC5</name>